<accession>A3PAV5</accession>
<feature type="chain" id="PRO_1000016171" description="Aspartyl/glutamyl-tRNA(Asn/Gln) amidotransferase subunit C">
    <location>
        <begin position="1"/>
        <end position="97"/>
    </location>
</feature>
<gene>
    <name evidence="1" type="primary">gatC</name>
    <name type="ordered locus">P9301_02571</name>
</gene>
<name>GATC_PROM0</name>
<proteinExistence type="inferred from homology"/>
<comment type="function">
    <text evidence="1">Allows the formation of correctly charged Asn-tRNA(Asn) or Gln-tRNA(Gln) through the transamidation of misacylated Asp-tRNA(Asn) or Glu-tRNA(Gln) in organisms which lack either or both of asparaginyl-tRNA or glutaminyl-tRNA synthetases. The reaction takes place in the presence of glutamine and ATP through an activated phospho-Asp-tRNA(Asn) or phospho-Glu-tRNA(Gln).</text>
</comment>
<comment type="catalytic activity">
    <reaction evidence="1">
        <text>L-glutamyl-tRNA(Gln) + L-glutamine + ATP + H2O = L-glutaminyl-tRNA(Gln) + L-glutamate + ADP + phosphate + H(+)</text>
        <dbReference type="Rhea" id="RHEA:17521"/>
        <dbReference type="Rhea" id="RHEA-COMP:9681"/>
        <dbReference type="Rhea" id="RHEA-COMP:9684"/>
        <dbReference type="ChEBI" id="CHEBI:15377"/>
        <dbReference type="ChEBI" id="CHEBI:15378"/>
        <dbReference type="ChEBI" id="CHEBI:29985"/>
        <dbReference type="ChEBI" id="CHEBI:30616"/>
        <dbReference type="ChEBI" id="CHEBI:43474"/>
        <dbReference type="ChEBI" id="CHEBI:58359"/>
        <dbReference type="ChEBI" id="CHEBI:78520"/>
        <dbReference type="ChEBI" id="CHEBI:78521"/>
        <dbReference type="ChEBI" id="CHEBI:456216"/>
    </reaction>
</comment>
<comment type="catalytic activity">
    <reaction evidence="1">
        <text>L-aspartyl-tRNA(Asn) + L-glutamine + ATP + H2O = L-asparaginyl-tRNA(Asn) + L-glutamate + ADP + phosphate + 2 H(+)</text>
        <dbReference type="Rhea" id="RHEA:14513"/>
        <dbReference type="Rhea" id="RHEA-COMP:9674"/>
        <dbReference type="Rhea" id="RHEA-COMP:9677"/>
        <dbReference type="ChEBI" id="CHEBI:15377"/>
        <dbReference type="ChEBI" id="CHEBI:15378"/>
        <dbReference type="ChEBI" id="CHEBI:29985"/>
        <dbReference type="ChEBI" id="CHEBI:30616"/>
        <dbReference type="ChEBI" id="CHEBI:43474"/>
        <dbReference type="ChEBI" id="CHEBI:58359"/>
        <dbReference type="ChEBI" id="CHEBI:78515"/>
        <dbReference type="ChEBI" id="CHEBI:78516"/>
        <dbReference type="ChEBI" id="CHEBI:456216"/>
    </reaction>
</comment>
<comment type="subunit">
    <text evidence="1">Heterotrimer of A, B and C subunits.</text>
</comment>
<comment type="similarity">
    <text evidence="1">Belongs to the GatC family.</text>
</comment>
<keyword id="KW-0067">ATP-binding</keyword>
<keyword id="KW-0436">Ligase</keyword>
<keyword id="KW-0547">Nucleotide-binding</keyword>
<keyword id="KW-0648">Protein biosynthesis</keyword>
<keyword id="KW-1185">Reference proteome</keyword>
<organism>
    <name type="scientific">Prochlorococcus marinus (strain MIT 9301)</name>
    <dbReference type="NCBI Taxonomy" id="167546"/>
    <lineage>
        <taxon>Bacteria</taxon>
        <taxon>Bacillati</taxon>
        <taxon>Cyanobacteriota</taxon>
        <taxon>Cyanophyceae</taxon>
        <taxon>Synechococcales</taxon>
        <taxon>Prochlorococcaceae</taxon>
        <taxon>Prochlorococcus</taxon>
    </lineage>
</organism>
<sequence length="97" mass="11360">MTKITKEEVNKVANLARLELNENEINNHAEQLEKILDYIRQLEKIDTDDVPCTTRAIEVVNVFRKDENKNSDCNEEILELGPSREDKYFKVPKIINE</sequence>
<protein>
    <recommendedName>
        <fullName evidence="1">Aspartyl/glutamyl-tRNA(Asn/Gln) amidotransferase subunit C</fullName>
        <shortName evidence="1">Asp/Glu-ADT subunit C</shortName>
        <ecNumber evidence="1">6.3.5.-</ecNumber>
    </recommendedName>
</protein>
<reference key="1">
    <citation type="journal article" date="2007" name="PLoS Genet.">
        <title>Patterns and implications of gene gain and loss in the evolution of Prochlorococcus.</title>
        <authorList>
            <person name="Kettler G.C."/>
            <person name="Martiny A.C."/>
            <person name="Huang K."/>
            <person name="Zucker J."/>
            <person name="Coleman M.L."/>
            <person name="Rodrigue S."/>
            <person name="Chen F."/>
            <person name="Lapidus A."/>
            <person name="Ferriera S."/>
            <person name="Johnson J."/>
            <person name="Steglich C."/>
            <person name="Church G.M."/>
            <person name="Richardson P."/>
            <person name="Chisholm S.W."/>
        </authorList>
    </citation>
    <scope>NUCLEOTIDE SEQUENCE [LARGE SCALE GENOMIC DNA]</scope>
    <source>
        <strain>MIT 9301</strain>
    </source>
</reference>
<dbReference type="EC" id="6.3.5.-" evidence="1"/>
<dbReference type="EMBL" id="CP000576">
    <property type="protein sequence ID" value="ABO16880.1"/>
    <property type="molecule type" value="Genomic_DNA"/>
</dbReference>
<dbReference type="RefSeq" id="WP_011862278.1">
    <property type="nucleotide sequence ID" value="NC_009091.1"/>
</dbReference>
<dbReference type="SMR" id="A3PAV5"/>
<dbReference type="STRING" id="167546.P9301_02571"/>
<dbReference type="KEGG" id="pmg:P9301_02571"/>
<dbReference type="eggNOG" id="COG0721">
    <property type="taxonomic scope" value="Bacteria"/>
</dbReference>
<dbReference type="HOGENOM" id="CLU_105899_1_2_3"/>
<dbReference type="OrthoDB" id="9813938at2"/>
<dbReference type="Proteomes" id="UP000001430">
    <property type="component" value="Chromosome"/>
</dbReference>
<dbReference type="GO" id="GO:0050566">
    <property type="term" value="F:asparaginyl-tRNA synthase (glutamine-hydrolyzing) activity"/>
    <property type="evidence" value="ECO:0007669"/>
    <property type="project" value="RHEA"/>
</dbReference>
<dbReference type="GO" id="GO:0005524">
    <property type="term" value="F:ATP binding"/>
    <property type="evidence" value="ECO:0007669"/>
    <property type="project" value="UniProtKB-KW"/>
</dbReference>
<dbReference type="GO" id="GO:0050567">
    <property type="term" value="F:glutaminyl-tRNA synthase (glutamine-hydrolyzing) activity"/>
    <property type="evidence" value="ECO:0007669"/>
    <property type="project" value="UniProtKB-UniRule"/>
</dbReference>
<dbReference type="GO" id="GO:0070681">
    <property type="term" value="P:glutaminyl-tRNAGln biosynthesis via transamidation"/>
    <property type="evidence" value="ECO:0007669"/>
    <property type="project" value="TreeGrafter"/>
</dbReference>
<dbReference type="GO" id="GO:0006450">
    <property type="term" value="P:regulation of translational fidelity"/>
    <property type="evidence" value="ECO:0007669"/>
    <property type="project" value="InterPro"/>
</dbReference>
<dbReference type="GO" id="GO:0006412">
    <property type="term" value="P:translation"/>
    <property type="evidence" value="ECO:0007669"/>
    <property type="project" value="UniProtKB-UniRule"/>
</dbReference>
<dbReference type="Gene3D" id="1.10.20.60">
    <property type="entry name" value="Glu-tRNAGln amidotransferase C subunit, N-terminal domain"/>
    <property type="match status" value="1"/>
</dbReference>
<dbReference type="HAMAP" id="MF_00122">
    <property type="entry name" value="GatC"/>
    <property type="match status" value="1"/>
</dbReference>
<dbReference type="InterPro" id="IPR036113">
    <property type="entry name" value="Asp/Glu-ADT_sf_sub_c"/>
</dbReference>
<dbReference type="InterPro" id="IPR003837">
    <property type="entry name" value="GatC"/>
</dbReference>
<dbReference type="NCBIfam" id="TIGR00135">
    <property type="entry name" value="gatC"/>
    <property type="match status" value="1"/>
</dbReference>
<dbReference type="PANTHER" id="PTHR15004">
    <property type="entry name" value="GLUTAMYL-TRNA(GLN) AMIDOTRANSFERASE SUBUNIT C, MITOCHONDRIAL"/>
    <property type="match status" value="1"/>
</dbReference>
<dbReference type="PANTHER" id="PTHR15004:SF0">
    <property type="entry name" value="GLUTAMYL-TRNA(GLN) AMIDOTRANSFERASE SUBUNIT C, MITOCHONDRIAL"/>
    <property type="match status" value="1"/>
</dbReference>
<dbReference type="Pfam" id="PF02686">
    <property type="entry name" value="GatC"/>
    <property type="match status" value="1"/>
</dbReference>
<dbReference type="SUPFAM" id="SSF141000">
    <property type="entry name" value="Glu-tRNAGln amidotransferase C subunit"/>
    <property type="match status" value="1"/>
</dbReference>
<evidence type="ECO:0000255" key="1">
    <source>
        <dbReference type="HAMAP-Rule" id="MF_00122"/>
    </source>
</evidence>